<feature type="chain" id="PRO_0000350222" description="Probable dual-specificity RNA methyltransferase RlmN">
    <location>
        <begin position="1"/>
        <end position="365"/>
    </location>
</feature>
<feature type="domain" description="Radical SAM core" evidence="2">
    <location>
        <begin position="105"/>
        <end position="344"/>
    </location>
</feature>
<feature type="active site" description="Proton acceptor" evidence="1">
    <location>
        <position position="99"/>
    </location>
</feature>
<feature type="active site" description="S-methylcysteine intermediate" evidence="1">
    <location>
        <position position="349"/>
    </location>
</feature>
<feature type="binding site" evidence="1">
    <location>
        <position position="119"/>
    </location>
    <ligand>
        <name>[4Fe-4S] cluster</name>
        <dbReference type="ChEBI" id="CHEBI:49883"/>
        <note>4Fe-4S-S-AdoMet</note>
    </ligand>
</feature>
<feature type="binding site" evidence="1">
    <location>
        <position position="123"/>
    </location>
    <ligand>
        <name>[4Fe-4S] cluster</name>
        <dbReference type="ChEBI" id="CHEBI:49883"/>
        <note>4Fe-4S-S-AdoMet</note>
    </ligand>
</feature>
<feature type="binding site" evidence="1">
    <location>
        <position position="126"/>
    </location>
    <ligand>
        <name>[4Fe-4S] cluster</name>
        <dbReference type="ChEBI" id="CHEBI:49883"/>
        <note>4Fe-4S-S-AdoMet</note>
    </ligand>
</feature>
<feature type="binding site" evidence="1">
    <location>
        <begin position="171"/>
        <end position="172"/>
    </location>
    <ligand>
        <name>S-adenosyl-L-methionine</name>
        <dbReference type="ChEBI" id="CHEBI:59789"/>
    </ligand>
</feature>
<feature type="binding site" evidence="1">
    <location>
        <position position="203"/>
    </location>
    <ligand>
        <name>S-adenosyl-L-methionine</name>
        <dbReference type="ChEBI" id="CHEBI:59789"/>
    </ligand>
</feature>
<feature type="binding site" evidence="1">
    <location>
        <begin position="227"/>
        <end position="229"/>
    </location>
    <ligand>
        <name>S-adenosyl-L-methionine</name>
        <dbReference type="ChEBI" id="CHEBI:59789"/>
    </ligand>
</feature>
<feature type="binding site" evidence="1">
    <location>
        <position position="305"/>
    </location>
    <ligand>
        <name>S-adenosyl-L-methionine</name>
        <dbReference type="ChEBI" id="CHEBI:59789"/>
    </ligand>
</feature>
<feature type="disulfide bond" description="(transient)" evidence="1">
    <location>
        <begin position="112"/>
        <end position="349"/>
    </location>
</feature>
<protein>
    <recommendedName>
        <fullName evidence="1">Probable dual-specificity RNA methyltransferase RlmN</fullName>
        <ecNumber evidence="1">2.1.1.192</ecNumber>
    </recommendedName>
    <alternativeName>
        <fullName evidence="1">23S rRNA (adenine(2503)-C(2))-methyltransferase</fullName>
    </alternativeName>
    <alternativeName>
        <fullName evidence="1">23S rRNA m2A2503 methyltransferase</fullName>
    </alternativeName>
    <alternativeName>
        <fullName evidence="1">Ribosomal RNA large subunit methyltransferase N</fullName>
    </alternativeName>
    <alternativeName>
        <fullName evidence="1">tRNA (adenine(37)-C(2))-methyltransferase</fullName>
    </alternativeName>
    <alternativeName>
        <fullName evidence="1">tRNA m2A37 methyltransferase</fullName>
    </alternativeName>
</protein>
<proteinExistence type="inferred from homology"/>
<organism>
    <name type="scientific">Lactococcus lactis subsp. cremoris (strain MG1363)</name>
    <dbReference type="NCBI Taxonomy" id="416870"/>
    <lineage>
        <taxon>Bacteria</taxon>
        <taxon>Bacillati</taxon>
        <taxon>Bacillota</taxon>
        <taxon>Bacilli</taxon>
        <taxon>Lactobacillales</taxon>
        <taxon>Streptococcaceae</taxon>
        <taxon>Lactococcus</taxon>
        <taxon>Lactococcus cremoris subsp. cremoris</taxon>
    </lineage>
</organism>
<dbReference type="EC" id="2.1.1.192" evidence="1"/>
<dbReference type="EMBL" id="AM406671">
    <property type="protein sequence ID" value="CAL96800.1"/>
    <property type="molecule type" value="Genomic_DNA"/>
</dbReference>
<dbReference type="RefSeq" id="WP_011834280.1">
    <property type="nucleotide sequence ID" value="NC_009004.1"/>
</dbReference>
<dbReference type="SMR" id="A2RHR3"/>
<dbReference type="STRING" id="416870.llmg_0194"/>
<dbReference type="KEGG" id="llm:llmg_0194"/>
<dbReference type="eggNOG" id="COG0820">
    <property type="taxonomic scope" value="Bacteria"/>
</dbReference>
<dbReference type="HOGENOM" id="CLU_029101_0_1_9"/>
<dbReference type="OrthoDB" id="9793973at2"/>
<dbReference type="PhylomeDB" id="A2RHR3"/>
<dbReference type="Proteomes" id="UP000000364">
    <property type="component" value="Chromosome"/>
</dbReference>
<dbReference type="GO" id="GO:0005737">
    <property type="term" value="C:cytoplasm"/>
    <property type="evidence" value="ECO:0007669"/>
    <property type="project" value="UniProtKB-SubCell"/>
</dbReference>
<dbReference type="GO" id="GO:0051539">
    <property type="term" value="F:4 iron, 4 sulfur cluster binding"/>
    <property type="evidence" value="ECO:0007669"/>
    <property type="project" value="UniProtKB-UniRule"/>
</dbReference>
<dbReference type="GO" id="GO:0046872">
    <property type="term" value="F:metal ion binding"/>
    <property type="evidence" value="ECO:0007669"/>
    <property type="project" value="UniProtKB-KW"/>
</dbReference>
<dbReference type="GO" id="GO:0070040">
    <property type="term" value="F:rRNA (adenine(2503)-C2-)-methyltransferase activity"/>
    <property type="evidence" value="ECO:0007669"/>
    <property type="project" value="UniProtKB-UniRule"/>
</dbReference>
<dbReference type="GO" id="GO:0019843">
    <property type="term" value="F:rRNA binding"/>
    <property type="evidence" value="ECO:0007669"/>
    <property type="project" value="UniProtKB-UniRule"/>
</dbReference>
<dbReference type="GO" id="GO:0002935">
    <property type="term" value="F:tRNA (adenine(37)-C2)-methyltransferase activity"/>
    <property type="evidence" value="ECO:0007669"/>
    <property type="project" value="UniProtKB-UniRule"/>
</dbReference>
<dbReference type="GO" id="GO:0000049">
    <property type="term" value="F:tRNA binding"/>
    <property type="evidence" value="ECO:0007669"/>
    <property type="project" value="UniProtKB-UniRule"/>
</dbReference>
<dbReference type="GO" id="GO:0070475">
    <property type="term" value="P:rRNA base methylation"/>
    <property type="evidence" value="ECO:0007669"/>
    <property type="project" value="UniProtKB-UniRule"/>
</dbReference>
<dbReference type="GO" id="GO:0030488">
    <property type="term" value="P:tRNA methylation"/>
    <property type="evidence" value="ECO:0007669"/>
    <property type="project" value="UniProtKB-UniRule"/>
</dbReference>
<dbReference type="CDD" id="cd01335">
    <property type="entry name" value="Radical_SAM"/>
    <property type="match status" value="1"/>
</dbReference>
<dbReference type="FunFam" id="3.20.20.70:FF:000014">
    <property type="entry name" value="Probable dual-specificity RNA methyltransferase RlmN"/>
    <property type="match status" value="1"/>
</dbReference>
<dbReference type="Gene3D" id="1.10.150.530">
    <property type="match status" value="1"/>
</dbReference>
<dbReference type="Gene3D" id="3.20.20.70">
    <property type="entry name" value="Aldolase class I"/>
    <property type="match status" value="1"/>
</dbReference>
<dbReference type="HAMAP" id="MF_01849">
    <property type="entry name" value="RNA_methyltr_RlmN"/>
    <property type="match status" value="1"/>
</dbReference>
<dbReference type="InterPro" id="IPR013785">
    <property type="entry name" value="Aldolase_TIM"/>
</dbReference>
<dbReference type="InterPro" id="IPR040072">
    <property type="entry name" value="Methyltransferase_A"/>
</dbReference>
<dbReference type="InterPro" id="IPR048641">
    <property type="entry name" value="RlmN_N"/>
</dbReference>
<dbReference type="InterPro" id="IPR027492">
    <property type="entry name" value="RNA_MTrfase_RlmN"/>
</dbReference>
<dbReference type="InterPro" id="IPR004383">
    <property type="entry name" value="rRNA_lsu_MTrfase_RlmN/Cfr"/>
</dbReference>
<dbReference type="InterPro" id="IPR007197">
    <property type="entry name" value="rSAM"/>
</dbReference>
<dbReference type="NCBIfam" id="TIGR00048">
    <property type="entry name" value="rRNA_mod_RlmN"/>
    <property type="match status" value="1"/>
</dbReference>
<dbReference type="PANTHER" id="PTHR30544">
    <property type="entry name" value="23S RRNA METHYLTRANSFERASE"/>
    <property type="match status" value="1"/>
</dbReference>
<dbReference type="PANTHER" id="PTHR30544:SF5">
    <property type="entry name" value="RADICAL SAM CORE DOMAIN-CONTAINING PROTEIN"/>
    <property type="match status" value="1"/>
</dbReference>
<dbReference type="Pfam" id="PF04055">
    <property type="entry name" value="Radical_SAM"/>
    <property type="match status" value="1"/>
</dbReference>
<dbReference type="Pfam" id="PF21016">
    <property type="entry name" value="RlmN_N"/>
    <property type="match status" value="1"/>
</dbReference>
<dbReference type="PIRSF" id="PIRSF006004">
    <property type="entry name" value="CHP00048"/>
    <property type="match status" value="1"/>
</dbReference>
<dbReference type="SFLD" id="SFLDF00275">
    <property type="entry name" value="adenosine_C2_methyltransferase"/>
    <property type="match status" value="1"/>
</dbReference>
<dbReference type="SFLD" id="SFLDG01062">
    <property type="entry name" value="methyltransferase_(Class_A)"/>
    <property type="match status" value="1"/>
</dbReference>
<dbReference type="SUPFAM" id="SSF102114">
    <property type="entry name" value="Radical SAM enzymes"/>
    <property type="match status" value="1"/>
</dbReference>
<dbReference type="PROSITE" id="PS51918">
    <property type="entry name" value="RADICAL_SAM"/>
    <property type="match status" value="1"/>
</dbReference>
<gene>
    <name evidence="1" type="primary">rlmN</name>
    <name type="ordered locus">llmg_0194</name>
</gene>
<keyword id="KW-0004">4Fe-4S</keyword>
<keyword id="KW-0963">Cytoplasm</keyword>
<keyword id="KW-1015">Disulfide bond</keyword>
<keyword id="KW-0408">Iron</keyword>
<keyword id="KW-0411">Iron-sulfur</keyword>
<keyword id="KW-0479">Metal-binding</keyword>
<keyword id="KW-0489">Methyltransferase</keyword>
<keyword id="KW-0698">rRNA processing</keyword>
<keyword id="KW-0949">S-adenosyl-L-methionine</keyword>
<keyword id="KW-0808">Transferase</keyword>
<keyword id="KW-0819">tRNA processing</keyword>
<comment type="function">
    <text evidence="1">Specifically methylates position 2 of adenine 2503 in 23S rRNA and position 2 of adenine 37 in tRNAs.</text>
</comment>
<comment type="catalytic activity">
    <reaction evidence="1">
        <text>adenosine(2503) in 23S rRNA + 2 reduced [2Fe-2S]-[ferredoxin] + 2 S-adenosyl-L-methionine = 2-methyladenosine(2503) in 23S rRNA + 5'-deoxyadenosine + L-methionine + 2 oxidized [2Fe-2S]-[ferredoxin] + S-adenosyl-L-homocysteine</text>
        <dbReference type="Rhea" id="RHEA:42916"/>
        <dbReference type="Rhea" id="RHEA-COMP:10000"/>
        <dbReference type="Rhea" id="RHEA-COMP:10001"/>
        <dbReference type="Rhea" id="RHEA-COMP:10152"/>
        <dbReference type="Rhea" id="RHEA-COMP:10282"/>
        <dbReference type="ChEBI" id="CHEBI:17319"/>
        <dbReference type="ChEBI" id="CHEBI:33737"/>
        <dbReference type="ChEBI" id="CHEBI:33738"/>
        <dbReference type="ChEBI" id="CHEBI:57844"/>
        <dbReference type="ChEBI" id="CHEBI:57856"/>
        <dbReference type="ChEBI" id="CHEBI:59789"/>
        <dbReference type="ChEBI" id="CHEBI:74411"/>
        <dbReference type="ChEBI" id="CHEBI:74497"/>
        <dbReference type="EC" id="2.1.1.192"/>
    </reaction>
</comment>
<comment type="catalytic activity">
    <reaction evidence="1">
        <text>adenosine(37) in tRNA + 2 reduced [2Fe-2S]-[ferredoxin] + 2 S-adenosyl-L-methionine = 2-methyladenosine(37) in tRNA + 5'-deoxyadenosine + L-methionine + 2 oxidized [2Fe-2S]-[ferredoxin] + S-adenosyl-L-homocysteine</text>
        <dbReference type="Rhea" id="RHEA:43332"/>
        <dbReference type="Rhea" id="RHEA-COMP:10000"/>
        <dbReference type="Rhea" id="RHEA-COMP:10001"/>
        <dbReference type="Rhea" id="RHEA-COMP:10162"/>
        <dbReference type="Rhea" id="RHEA-COMP:10485"/>
        <dbReference type="ChEBI" id="CHEBI:17319"/>
        <dbReference type="ChEBI" id="CHEBI:33737"/>
        <dbReference type="ChEBI" id="CHEBI:33738"/>
        <dbReference type="ChEBI" id="CHEBI:57844"/>
        <dbReference type="ChEBI" id="CHEBI:57856"/>
        <dbReference type="ChEBI" id="CHEBI:59789"/>
        <dbReference type="ChEBI" id="CHEBI:74411"/>
        <dbReference type="ChEBI" id="CHEBI:74497"/>
        <dbReference type="EC" id="2.1.1.192"/>
    </reaction>
</comment>
<comment type="cofactor">
    <cofactor evidence="1">
        <name>[4Fe-4S] cluster</name>
        <dbReference type="ChEBI" id="CHEBI:49883"/>
    </cofactor>
    <text evidence="1">Binds 1 [4Fe-4S] cluster. The cluster is coordinated with 3 cysteines and an exchangeable S-adenosyl-L-methionine.</text>
</comment>
<comment type="subcellular location">
    <subcellularLocation>
        <location evidence="1">Cytoplasm</location>
    </subcellularLocation>
</comment>
<comment type="miscellaneous">
    <text evidence="1">Reaction proceeds by a ping-pong mechanism involving intermediate methylation of a conserved cysteine residue.</text>
</comment>
<comment type="similarity">
    <text evidence="1">Belongs to the radical SAM superfamily. RlmN family.</text>
</comment>
<sequence>MTENITTETRPSIYGLTRDQLIEWAIENGEKKFRATQVWDWLYRKRVQSFEEMSNLSAVFIDKLNEAFILNPLEQVVVQESADGTVKYLFMLPDKVMIETVLMRQSYGLSVCVTTQVGCNMGCTFCASGILKKERDVTAGEIVSQIMLVQKYFDERGLDERVSHVVVMGIGEPFDNYEHLMNFLRVINDDNGLAIGARHITVSTCGFMPAKIKEFAHDNLQINLAISLHAPNNELRTSLMRITRNAPLEKLFEAIDYYTETTNRRVTYEYIMLSGENDSPEIAQQLADLIKSRNKLSYVNLIPYNPVAEHIKYERSTKDNTAKFYDVLKKNGINCVVRQEHGTDIDAACGQLRSKQIKKNKAKLA</sequence>
<evidence type="ECO:0000255" key="1">
    <source>
        <dbReference type="HAMAP-Rule" id="MF_01849"/>
    </source>
</evidence>
<evidence type="ECO:0000255" key="2">
    <source>
        <dbReference type="PROSITE-ProRule" id="PRU01266"/>
    </source>
</evidence>
<reference key="1">
    <citation type="journal article" date="2007" name="J. Bacteriol.">
        <title>The complete genome sequence of the lactic acid bacterial paradigm Lactococcus lactis subsp. cremoris MG1363.</title>
        <authorList>
            <person name="Wegmann U."/>
            <person name="O'Connell-Motherway M."/>
            <person name="Zomer A."/>
            <person name="Buist G."/>
            <person name="Shearman C."/>
            <person name="Canchaya C."/>
            <person name="Ventura M."/>
            <person name="Goesmann A."/>
            <person name="Gasson M.J."/>
            <person name="Kuipers O.P."/>
            <person name="van Sinderen D."/>
            <person name="Kok J."/>
        </authorList>
    </citation>
    <scope>NUCLEOTIDE SEQUENCE [LARGE SCALE GENOMIC DNA]</scope>
    <source>
        <strain>MG1363</strain>
    </source>
</reference>
<accession>A2RHR3</accession>
<name>RLMN_LACLM</name>